<protein>
    <recommendedName>
        <fullName evidence="1">Large ribosomal subunit protein bL34</fullName>
    </recommendedName>
    <alternativeName>
        <fullName evidence="2">50S ribosomal protein L34</fullName>
    </alternativeName>
</protein>
<feature type="chain" id="PRO_0000187353" description="Large ribosomal subunit protein bL34">
    <location>
        <begin position="1"/>
        <end position="44"/>
    </location>
</feature>
<name>RL34_BRUME</name>
<reference key="1">
    <citation type="journal article" date="2002" name="Proc. Natl. Acad. Sci. U.S.A.">
        <title>The genome sequence of the facultative intracellular pathogen Brucella melitensis.</title>
        <authorList>
            <person name="DelVecchio V.G."/>
            <person name="Kapatral V."/>
            <person name="Redkar R.J."/>
            <person name="Patra G."/>
            <person name="Mujer C."/>
            <person name="Los T."/>
            <person name="Ivanova N."/>
            <person name="Anderson I."/>
            <person name="Bhattacharyya A."/>
            <person name="Lykidis A."/>
            <person name="Reznik G."/>
            <person name="Jablonski L."/>
            <person name="Larsen N."/>
            <person name="D'Souza M."/>
            <person name="Bernal A."/>
            <person name="Mazur M."/>
            <person name="Goltsman E."/>
            <person name="Selkov E."/>
            <person name="Elzer P.H."/>
            <person name="Hagius S."/>
            <person name="O'Callaghan D."/>
            <person name="Letesson J.-J."/>
            <person name="Haselkorn R."/>
            <person name="Kyrpides N.C."/>
            <person name="Overbeek R."/>
        </authorList>
    </citation>
    <scope>NUCLEOTIDE SEQUENCE [LARGE SCALE GENOMIC DNA]</scope>
    <source>
        <strain>ATCC 23456 / CCUG 17765 / NCTC 10094 / 16M</strain>
    </source>
</reference>
<proteinExistence type="inferred from homology"/>
<dbReference type="EMBL" id="AE008918">
    <property type="protein sequence ID" value="AAL53518.1"/>
    <property type="molecule type" value="Genomic_DNA"/>
</dbReference>
<dbReference type="PIR" id="AC3544">
    <property type="entry name" value="AC3544"/>
</dbReference>
<dbReference type="RefSeq" id="WP_002965629.1">
    <property type="nucleotide sequence ID" value="NZ_GG703779.1"/>
</dbReference>
<dbReference type="SMR" id="P66242"/>
<dbReference type="GeneID" id="97534928"/>
<dbReference type="KEGG" id="bme:BMEI0276"/>
<dbReference type="eggNOG" id="COG0230">
    <property type="taxonomic scope" value="Bacteria"/>
</dbReference>
<dbReference type="Proteomes" id="UP000000419">
    <property type="component" value="Chromosome II"/>
</dbReference>
<dbReference type="GO" id="GO:1990904">
    <property type="term" value="C:ribonucleoprotein complex"/>
    <property type="evidence" value="ECO:0007669"/>
    <property type="project" value="UniProtKB-KW"/>
</dbReference>
<dbReference type="GO" id="GO:0005840">
    <property type="term" value="C:ribosome"/>
    <property type="evidence" value="ECO:0007669"/>
    <property type="project" value="UniProtKB-KW"/>
</dbReference>
<dbReference type="GO" id="GO:0003735">
    <property type="term" value="F:structural constituent of ribosome"/>
    <property type="evidence" value="ECO:0007669"/>
    <property type="project" value="InterPro"/>
</dbReference>
<dbReference type="GO" id="GO:0006412">
    <property type="term" value="P:translation"/>
    <property type="evidence" value="ECO:0007669"/>
    <property type="project" value="UniProtKB-UniRule"/>
</dbReference>
<dbReference type="FunFam" id="1.10.287.3980:FF:000001">
    <property type="entry name" value="Mitochondrial ribosomal protein L34"/>
    <property type="match status" value="1"/>
</dbReference>
<dbReference type="Gene3D" id="1.10.287.3980">
    <property type="match status" value="1"/>
</dbReference>
<dbReference type="HAMAP" id="MF_00391">
    <property type="entry name" value="Ribosomal_bL34"/>
    <property type="match status" value="1"/>
</dbReference>
<dbReference type="InterPro" id="IPR000271">
    <property type="entry name" value="Ribosomal_bL34"/>
</dbReference>
<dbReference type="InterPro" id="IPR020939">
    <property type="entry name" value="Ribosomal_bL34_CS"/>
</dbReference>
<dbReference type="NCBIfam" id="TIGR01030">
    <property type="entry name" value="rpmH_bact"/>
    <property type="match status" value="1"/>
</dbReference>
<dbReference type="PANTHER" id="PTHR14503:SF4">
    <property type="entry name" value="LARGE RIBOSOMAL SUBUNIT PROTEIN BL34M"/>
    <property type="match status" value="1"/>
</dbReference>
<dbReference type="PANTHER" id="PTHR14503">
    <property type="entry name" value="MITOCHONDRIAL RIBOSOMAL PROTEIN 34 FAMILY MEMBER"/>
    <property type="match status" value="1"/>
</dbReference>
<dbReference type="Pfam" id="PF00468">
    <property type="entry name" value="Ribosomal_L34"/>
    <property type="match status" value="1"/>
</dbReference>
<dbReference type="PROSITE" id="PS00784">
    <property type="entry name" value="RIBOSOMAL_L34"/>
    <property type="match status" value="1"/>
</dbReference>
<keyword id="KW-0687">Ribonucleoprotein</keyword>
<keyword id="KW-0689">Ribosomal protein</keyword>
<sequence length="44" mass="5168">MKRTYQPSKIVRKRRHGFRARMATTGGRKVLAARRTRGRKRLSA</sequence>
<comment type="similarity">
    <text evidence="1">Belongs to the bacterial ribosomal protein bL34 family.</text>
</comment>
<evidence type="ECO:0000255" key="1">
    <source>
        <dbReference type="HAMAP-Rule" id="MF_00391"/>
    </source>
</evidence>
<evidence type="ECO:0000305" key="2"/>
<evidence type="ECO:0000312" key="3">
    <source>
        <dbReference type="EMBL" id="AAL53518.1"/>
    </source>
</evidence>
<organism>
    <name type="scientific">Brucella melitensis biotype 1 (strain ATCC 23456 / CCUG 17765 / NCTC 10094 / 16M)</name>
    <dbReference type="NCBI Taxonomy" id="224914"/>
    <lineage>
        <taxon>Bacteria</taxon>
        <taxon>Pseudomonadati</taxon>
        <taxon>Pseudomonadota</taxon>
        <taxon>Alphaproteobacteria</taxon>
        <taxon>Hyphomicrobiales</taxon>
        <taxon>Brucellaceae</taxon>
        <taxon>Brucella/Ochrobactrum group</taxon>
        <taxon>Brucella</taxon>
    </lineage>
</organism>
<gene>
    <name evidence="1" type="primary">rpmH</name>
    <name evidence="3" type="ordered locus">BMEI0276</name>
</gene>
<accession>P66242</accession>
<accession>Q8YDA1</accession>